<protein>
    <recommendedName>
        <fullName evidence="1">2,3,4,5-tetrahydropyridine-2,6-dicarboxylate N-acetyltransferase</fullName>
        <ecNumber evidence="1">2.3.1.89</ecNumber>
    </recommendedName>
    <alternativeName>
        <fullName evidence="1">Tetrahydrodipicolinate N-acetyltransferase</fullName>
        <shortName evidence="1">THP acetyltransferase</shortName>
        <shortName evidence="1">Tetrahydropicolinate acetylase</shortName>
    </alternativeName>
</protein>
<sequence length="237" mass="24703">MAQLDAQAIINYIGTAPKKTPVKVYVKGTDLKALTFPAEVEAFVEQTTGVLFGDWQVLKPFLAEHEADFAAVRVENAARNSAVPLLDLKEVNARIEPGATIRDQVLIGDNAVIMMGAVINIGAEIGEGTMIDMGAILGGRALVGKHCHIGAGTVLAGVVEPASAEPVRIDDDVLIGANAVVIEGVHVGEGAVVAAGAVVTQDVAPHTVVAGVPARYIKDVDEQTDSKTGLEDDLRKL</sequence>
<name>DAPH_LIMF3</name>
<gene>
    <name evidence="1" type="primary">dapH</name>
    <name type="ordered locus">LAF_0855</name>
</gene>
<proteinExistence type="inferred from homology"/>
<keyword id="KW-0012">Acyltransferase</keyword>
<keyword id="KW-0028">Amino-acid biosynthesis</keyword>
<keyword id="KW-0220">Diaminopimelate biosynthesis</keyword>
<keyword id="KW-0457">Lysine biosynthesis</keyword>
<keyword id="KW-1185">Reference proteome</keyword>
<keyword id="KW-0677">Repeat</keyword>
<keyword id="KW-0808">Transferase</keyword>
<feature type="chain" id="PRO_0000376664" description="2,3,4,5-tetrahydropyridine-2,6-dicarboxylate N-acetyltransferase">
    <location>
        <begin position="1"/>
        <end position="237"/>
    </location>
</feature>
<accession>B2GC09</accession>
<organism>
    <name type="scientific">Limosilactobacillus fermentum (strain NBRC 3956 / LMG 18251)</name>
    <name type="common">Lactobacillus fermentum</name>
    <dbReference type="NCBI Taxonomy" id="334390"/>
    <lineage>
        <taxon>Bacteria</taxon>
        <taxon>Bacillati</taxon>
        <taxon>Bacillota</taxon>
        <taxon>Bacilli</taxon>
        <taxon>Lactobacillales</taxon>
        <taxon>Lactobacillaceae</taxon>
        <taxon>Limosilactobacillus</taxon>
    </lineage>
</organism>
<reference key="1">
    <citation type="journal article" date="2008" name="DNA Res.">
        <title>Comparative genome analysis of Lactobacillus reuteri and Lactobacillus fermentum reveal a genomic island for reuterin and cobalamin production.</title>
        <authorList>
            <person name="Morita H."/>
            <person name="Toh H."/>
            <person name="Fukuda S."/>
            <person name="Horikawa H."/>
            <person name="Oshima K."/>
            <person name="Suzuki T."/>
            <person name="Murakami M."/>
            <person name="Hisamatsu S."/>
            <person name="Kato Y."/>
            <person name="Takizawa T."/>
            <person name="Fukuoka H."/>
            <person name="Yoshimura T."/>
            <person name="Itoh K."/>
            <person name="O'Sullivan D.J."/>
            <person name="McKay L.L."/>
            <person name="Ohno H."/>
            <person name="Kikuchi J."/>
            <person name="Masaoka T."/>
            <person name="Hattori M."/>
        </authorList>
    </citation>
    <scope>NUCLEOTIDE SEQUENCE [LARGE SCALE GENOMIC DNA]</scope>
    <source>
        <strain>NBRC 3956 / LMG 18251</strain>
    </source>
</reference>
<evidence type="ECO:0000255" key="1">
    <source>
        <dbReference type="HAMAP-Rule" id="MF_01691"/>
    </source>
</evidence>
<dbReference type="EC" id="2.3.1.89" evidence="1"/>
<dbReference type="EMBL" id="AP008937">
    <property type="protein sequence ID" value="BAG27191.1"/>
    <property type="molecule type" value="Genomic_DNA"/>
</dbReference>
<dbReference type="SMR" id="B2GC09"/>
<dbReference type="KEGG" id="lfe:LAF_0855"/>
<dbReference type="eggNOG" id="COG2171">
    <property type="taxonomic scope" value="Bacteria"/>
</dbReference>
<dbReference type="HOGENOM" id="CLU_103751_0_0_9"/>
<dbReference type="UniPathway" id="UPA00034">
    <property type="reaction ID" value="UER00022"/>
</dbReference>
<dbReference type="Proteomes" id="UP000001697">
    <property type="component" value="Chromosome"/>
</dbReference>
<dbReference type="GO" id="GO:0047200">
    <property type="term" value="F:tetrahydrodipicolinate N-acetyltransferase activity"/>
    <property type="evidence" value="ECO:0007669"/>
    <property type="project" value="UniProtKB-EC"/>
</dbReference>
<dbReference type="GO" id="GO:0019877">
    <property type="term" value="P:diaminopimelate biosynthetic process"/>
    <property type="evidence" value="ECO:0007669"/>
    <property type="project" value="UniProtKB-UniRule"/>
</dbReference>
<dbReference type="GO" id="GO:0009089">
    <property type="term" value="P:lysine biosynthetic process via diaminopimelate"/>
    <property type="evidence" value="ECO:0007669"/>
    <property type="project" value="UniProtKB-UniRule"/>
</dbReference>
<dbReference type="Gene3D" id="2.160.10.10">
    <property type="entry name" value="Hexapeptide repeat proteins"/>
    <property type="match status" value="1"/>
</dbReference>
<dbReference type="Gene3D" id="3.30.70.250">
    <property type="entry name" value="Malonyl-CoA ACP transacylase, ACP-binding"/>
    <property type="match status" value="1"/>
</dbReference>
<dbReference type="HAMAP" id="MF_01691">
    <property type="entry name" value="DapH"/>
    <property type="match status" value="1"/>
</dbReference>
<dbReference type="InterPro" id="IPR019873">
    <property type="entry name" value="DapH"/>
</dbReference>
<dbReference type="InterPro" id="IPR013710">
    <property type="entry name" value="DapH_N"/>
</dbReference>
<dbReference type="InterPro" id="IPR001451">
    <property type="entry name" value="Hexapep"/>
</dbReference>
<dbReference type="InterPro" id="IPR018357">
    <property type="entry name" value="Hexapep_transf_CS"/>
</dbReference>
<dbReference type="InterPro" id="IPR050179">
    <property type="entry name" value="Trans_hexapeptide_repeat"/>
</dbReference>
<dbReference type="InterPro" id="IPR011004">
    <property type="entry name" value="Trimer_LpxA-like_sf"/>
</dbReference>
<dbReference type="NCBIfam" id="TIGR03532">
    <property type="entry name" value="DapD_Ac"/>
    <property type="match status" value="1"/>
</dbReference>
<dbReference type="PANTHER" id="PTHR43300:SF10">
    <property type="entry name" value="2,3,4,5-TETRAHYDROPYRIDINE-2,6-DICARBOXYLATE N-ACETYLTRANSFERASE"/>
    <property type="match status" value="1"/>
</dbReference>
<dbReference type="PANTHER" id="PTHR43300">
    <property type="entry name" value="ACETYLTRANSFERASE"/>
    <property type="match status" value="1"/>
</dbReference>
<dbReference type="Pfam" id="PF08503">
    <property type="entry name" value="DapH_N"/>
    <property type="match status" value="1"/>
</dbReference>
<dbReference type="Pfam" id="PF00132">
    <property type="entry name" value="Hexapep"/>
    <property type="match status" value="1"/>
</dbReference>
<dbReference type="Pfam" id="PF14602">
    <property type="entry name" value="Hexapep_2"/>
    <property type="match status" value="1"/>
</dbReference>
<dbReference type="SUPFAM" id="SSF51161">
    <property type="entry name" value="Trimeric LpxA-like enzymes"/>
    <property type="match status" value="1"/>
</dbReference>
<dbReference type="PROSITE" id="PS00101">
    <property type="entry name" value="HEXAPEP_TRANSFERASES"/>
    <property type="match status" value="1"/>
</dbReference>
<comment type="function">
    <text evidence="1">Catalyzes the transfer of an acetyl group from acetyl-CoA to tetrahydrodipicolinate.</text>
</comment>
<comment type="catalytic activity">
    <reaction evidence="1">
        <text>(S)-2,3,4,5-tetrahydrodipicolinate + acetyl-CoA + H2O = L-2-acetamido-6-oxoheptanedioate + CoA</text>
        <dbReference type="Rhea" id="RHEA:13085"/>
        <dbReference type="ChEBI" id="CHEBI:15377"/>
        <dbReference type="ChEBI" id="CHEBI:16845"/>
        <dbReference type="ChEBI" id="CHEBI:57287"/>
        <dbReference type="ChEBI" id="CHEBI:57288"/>
        <dbReference type="ChEBI" id="CHEBI:58117"/>
        <dbReference type="EC" id="2.3.1.89"/>
    </reaction>
</comment>
<comment type="pathway">
    <text evidence="1">Amino-acid biosynthesis; L-lysine biosynthesis via DAP pathway; LL-2,6-diaminopimelate from (S)-tetrahydrodipicolinate (acetylase route): step 1/3.</text>
</comment>
<comment type="similarity">
    <text evidence="1">Belongs to the transferase hexapeptide repeat family. DapH subfamily.</text>
</comment>